<feature type="signal peptide" evidence="2">
    <location>
        <begin position="1"/>
        <end position="29"/>
    </location>
</feature>
<feature type="chain" id="PRO_0000450807" description="Surface lipoprotein assembly modifier" evidence="2">
    <location>
        <begin position="30"/>
        <end position="486"/>
    </location>
</feature>
<feature type="transmembrane region" description="Beta stranded" evidence="2">
    <location>
        <begin position="199"/>
        <end position="209"/>
    </location>
</feature>
<feature type="transmembrane region" description="Beta stranded" evidence="2">
    <location>
        <begin position="237"/>
        <end position="248"/>
    </location>
</feature>
<feature type="transmembrane region" description="Beta stranded" evidence="2">
    <location>
        <begin position="253"/>
        <end position="262"/>
    </location>
</feature>
<feature type="transmembrane region" description="Beta stranded" evidence="2">
    <location>
        <begin position="276"/>
        <end position="286"/>
    </location>
</feature>
<feature type="transmembrane region" description="Beta stranded" evidence="2">
    <location>
        <begin position="290"/>
        <end position="300"/>
    </location>
</feature>
<feature type="transmembrane region" description="Beta stranded" evidence="2">
    <location>
        <begin position="320"/>
        <end position="330"/>
    </location>
</feature>
<feature type="transmembrane region" description="Beta stranded" evidence="2">
    <location>
        <begin position="334"/>
        <end position="344"/>
    </location>
</feature>
<feature type="transmembrane region" description="Beta stranded" evidence="2">
    <location>
        <begin position="358"/>
        <end position="367"/>
    </location>
</feature>
<feature type="transmembrane region" description="Beta stranded" evidence="2">
    <location>
        <begin position="373"/>
        <end position="382"/>
    </location>
</feature>
<feature type="transmembrane region" description="Beta stranded" evidence="2">
    <location>
        <begin position="395"/>
        <end position="404"/>
    </location>
</feature>
<feature type="transmembrane region" description="Beta stranded" evidence="2">
    <location>
        <begin position="409"/>
        <end position="419"/>
    </location>
</feature>
<feature type="transmembrane region" description="Beta stranded" evidence="2">
    <location>
        <begin position="437"/>
        <end position="446"/>
    </location>
</feature>
<feature type="transmembrane region" description="Beta stranded" evidence="2">
    <location>
        <begin position="453"/>
        <end position="463"/>
    </location>
</feature>
<feature type="transmembrane region" description="Beta stranded" evidence="2">
    <location>
        <begin position="476"/>
        <end position="486"/>
    </location>
</feature>
<feature type="region of interest" description="N-terminal domain" evidence="1">
    <location>
        <begin position="30"/>
        <end position="197"/>
    </location>
</feature>
<feature type="region of interest" description="C-terminal probable beta barrel" evidence="1">
    <location>
        <begin position="198"/>
        <end position="486"/>
    </location>
</feature>
<evidence type="ECO:0000250" key="1">
    <source>
        <dbReference type="UniProtKB" id="Q9K165"/>
    </source>
</evidence>
<evidence type="ECO:0000255" key="2"/>
<evidence type="ECO:0000269" key="3">
    <source>
    </source>
</evidence>
<evidence type="ECO:0000303" key="4">
    <source>
    </source>
</evidence>
<evidence type="ECO:0000305" key="5"/>
<evidence type="ECO:0000305" key="6">
    <source>
    </source>
</evidence>
<protein>
    <recommendedName>
        <fullName evidence="4">Surface lipoprotein assembly modifier</fullName>
        <shortName evidence="4">Slam</shortName>
    </recommendedName>
</protein>
<organism>
    <name type="scientific">Haemophilus influenzae (strain 86-028NP)</name>
    <dbReference type="NCBI Taxonomy" id="281310"/>
    <lineage>
        <taxon>Bacteria</taxon>
        <taxon>Pseudomonadati</taxon>
        <taxon>Pseudomonadota</taxon>
        <taxon>Gammaproteobacteria</taxon>
        <taxon>Pasteurellales</taxon>
        <taxon>Pasteurellaceae</taxon>
        <taxon>Haemophilus</taxon>
    </lineage>
</organism>
<keyword id="KW-0998">Cell outer membrane</keyword>
<keyword id="KW-0472">Membrane</keyword>
<keyword id="KW-0732">Signal</keyword>
<keyword id="KW-0812">Transmembrane</keyword>
<keyword id="KW-1134">Transmembrane beta strand</keyword>
<proteinExistence type="inferred from homology"/>
<gene>
    <name type="ordered locus">NTHI1171</name>
</gene>
<sequence length="486" mass="56677">MKNGVKQISFLSLIGLSLIGLSLTNIAWAKVARPKNDTLTNTIQSAELKTSSFSSMPKKEIPNRHIISLSKSQLAQHPRLVLRGLILALYQNNTQAVQLLLPLYKQFPQHDNFLLTWAKAIDAREQGDLTQSIAYYRELFALDASLLPLRYQLAQALFFNYENESAKIQFEKLRTEVDDEKFLGVIDQYLLTLNQRNQWIWQVGLNFLNDDNLNNAPKSGTKIGSWTAWEKESGKGGRVFFISRKKWPWADHFFSKTMFNGNGKYYWDNKKYNEATLRIGGGLGYQTALVEVSLFPFQEKRWYAGGSSGTNTMKQYADKLGIRLENVDWLSKTWQISTALEYGESRYKIRKHLDGNYYFISSTLFYLPKSTQFWFVGMDFHRENTQALDNAYQQKTLRLGWGQDWSYGISSRLTFSYANRVYREKDLIGIQQKNREYATTITLWHRNIHFMGLTPKLSWDYQKSTSNHAFYRYDKNRIYLEIGKIF</sequence>
<dbReference type="EMBL" id="CP000057">
    <property type="protein sequence ID" value="AAX88033.1"/>
    <property type="molecule type" value="Genomic_DNA"/>
</dbReference>
<dbReference type="RefSeq" id="WP_011272340.1">
    <property type="nucleotide sequence ID" value="NC_007146.2"/>
</dbReference>
<dbReference type="KEGG" id="hit:NTHI1171"/>
<dbReference type="HOGENOM" id="CLU_034927_1_0_6"/>
<dbReference type="Proteomes" id="UP000002525">
    <property type="component" value="Chromosome"/>
</dbReference>
<dbReference type="GO" id="GO:0009279">
    <property type="term" value="C:cell outer membrane"/>
    <property type="evidence" value="ECO:0007669"/>
    <property type="project" value="UniProtKB-SubCell"/>
</dbReference>
<dbReference type="InterPro" id="IPR007655">
    <property type="entry name" value="Slam_C_b-barrel"/>
</dbReference>
<dbReference type="InterPro" id="IPR011990">
    <property type="entry name" value="TPR-like_helical_dom_sf"/>
</dbReference>
<dbReference type="Pfam" id="PF04575">
    <property type="entry name" value="SlipAM"/>
    <property type="match status" value="1"/>
</dbReference>
<dbReference type="Pfam" id="PF24575">
    <property type="entry name" value="TPR_Slam"/>
    <property type="match status" value="1"/>
</dbReference>
<dbReference type="SUPFAM" id="SSF48452">
    <property type="entry name" value="TPR-like"/>
    <property type="match status" value="1"/>
</dbReference>
<comment type="function">
    <text evidence="3">Required for correct export to the cell surface of some cell outer membrane lipoproteins (tested with TpbP) upon heterologous expression in E.coli and probably also in Haemophilus.</text>
</comment>
<comment type="subcellular location">
    <subcellularLocation>
        <location evidence="6">Cell outer membrane</location>
        <topology evidence="2">Multi-pass membrane protein</topology>
    </subcellularLocation>
</comment>
<comment type="domain">
    <text evidence="1">Consists of a soluble N-terminal domain and C-terminal probable beta-barrel in the outer membrane with 14 predicted beta-strands.</text>
</comment>
<comment type="similarity">
    <text evidence="5">Belongs to the Slam family.</text>
</comment>
<name>SLAM_HAEI8</name>
<reference key="1">
    <citation type="journal article" date="2005" name="J. Bacteriol.">
        <title>Genomic sequence of an otitis media isolate of nontypeable Haemophilus influenzae: comparative study with H. influenzae serotype d, strain KW20.</title>
        <authorList>
            <person name="Harrison A."/>
            <person name="Dyer D.W."/>
            <person name="Gillaspy A."/>
            <person name="Ray W.C."/>
            <person name="Mungur R."/>
            <person name="Carson M.B."/>
            <person name="Zhong H."/>
            <person name="Gipson J."/>
            <person name="Gipson M."/>
            <person name="Johnson L.S."/>
            <person name="Lewis L."/>
            <person name="Bakaletz L.O."/>
            <person name="Munson R.S. Jr."/>
        </authorList>
    </citation>
    <scope>NUCLEOTIDE SEQUENCE [LARGE SCALE GENOMIC DNA]</scope>
    <source>
        <strain>86-028NP</strain>
    </source>
</reference>
<reference key="2">
    <citation type="journal article" date="2017" name="Front. Cell. Infect. Microbiol.">
        <title>Identification of a Large Family of Slam-Dependent Surface Lipoproteins in Gram-Negative Bacteria.</title>
        <authorList>
            <person name="Hooda Y."/>
            <person name="Lai C.C.L."/>
            <person name="Moraes T.F."/>
        </authorList>
    </citation>
    <scope>FUNCTION</scope>
    <scope>SUBCELLULAR LOCATION</scope>
    <source>
        <strain>86-028NP</strain>
    </source>
</reference>
<accession>Q4QLR4</accession>